<dbReference type="EMBL" id="M63533">
    <property type="protein sequence ID" value="AAA43290.1"/>
    <property type="molecule type" value="Genomic_RNA"/>
</dbReference>
<dbReference type="EMBL" id="CY005801">
    <property type="protein sequence ID" value="ABB20499.1"/>
    <property type="molecule type" value="Genomic_RNA"/>
</dbReference>
<dbReference type="SMR" id="Q67171"/>
<dbReference type="Proteomes" id="UP000121173">
    <property type="component" value="Genome"/>
</dbReference>
<dbReference type="GO" id="GO:0042025">
    <property type="term" value="C:host cell nucleus"/>
    <property type="evidence" value="ECO:0007669"/>
    <property type="project" value="UniProtKB-SubCell"/>
</dbReference>
<dbReference type="GO" id="GO:0016020">
    <property type="term" value="C:membrane"/>
    <property type="evidence" value="ECO:0007669"/>
    <property type="project" value="UniProtKB-KW"/>
</dbReference>
<dbReference type="GO" id="GO:0055036">
    <property type="term" value="C:virion membrane"/>
    <property type="evidence" value="ECO:0007669"/>
    <property type="project" value="UniProtKB-SubCell"/>
</dbReference>
<dbReference type="GO" id="GO:0003723">
    <property type="term" value="F:RNA binding"/>
    <property type="evidence" value="ECO:0007669"/>
    <property type="project" value="UniProtKB-UniRule"/>
</dbReference>
<dbReference type="GO" id="GO:0039660">
    <property type="term" value="F:structural constituent of virion"/>
    <property type="evidence" value="ECO:0007669"/>
    <property type="project" value="UniProtKB-UniRule"/>
</dbReference>
<dbReference type="GO" id="GO:0046761">
    <property type="term" value="P:viral budding from plasma membrane"/>
    <property type="evidence" value="ECO:0007669"/>
    <property type="project" value="UniProtKB-UniRule"/>
</dbReference>
<dbReference type="FunFam" id="1.10.10.180:FF:000001">
    <property type="entry name" value="Matrix protein 1"/>
    <property type="match status" value="1"/>
</dbReference>
<dbReference type="FunFam" id="1.20.91.10:FF:000001">
    <property type="entry name" value="Matrix protein 1"/>
    <property type="match status" value="1"/>
</dbReference>
<dbReference type="Gene3D" id="1.10.10.180">
    <property type="match status" value="1"/>
</dbReference>
<dbReference type="Gene3D" id="1.20.91.10">
    <property type="match status" value="1"/>
</dbReference>
<dbReference type="HAMAP" id="MF_04068">
    <property type="entry name" value="INFV_M1"/>
    <property type="match status" value="1"/>
</dbReference>
<dbReference type="InterPro" id="IPR036039">
    <property type="entry name" value="Flu_matrix_M1"/>
</dbReference>
<dbReference type="InterPro" id="IPR013188">
    <property type="entry name" value="Flu_matrix_M1_C"/>
</dbReference>
<dbReference type="InterPro" id="IPR001561">
    <property type="entry name" value="Flu_matrix_M1_N"/>
</dbReference>
<dbReference type="InterPro" id="IPR015423">
    <property type="entry name" value="Flu_matrix_M1_N_sub1"/>
</dbReference>
<dbReference type="InterPro" id="IPR015799">
    <property type="entry name" value="Flu_matrix_M1_N_sub2"/>
</dbReference>
<dbReference type="InterPro" id="IPR037533">
    <property type="entry name" value="INFV_M1"/>
</dbReference>
<dbReference type="Pfam" id="PF00598">
    <property type="entry name" value="Flu_M1"/>
    <property type="match status" value="1"/>
</dbReference>
<dbReference type="Pfam" id="PF08289">
    <property type="entry name" value="Flu_M1_C"/>
    <property type="match status" value="1"/>
</dbReference>
<dbReference type="SMART" id="SM00759">
    <property type="entry name" value="Flu_M1_C"/>
    <property type="match status" value="1"/>
</dbReference>
<dbReference type="SUPFAM" id="SSF48145">
    <property type="entry name" value="Influenza virus matrix protein M1"/>
    <property type="match status" value="1"/>
</dbReference>
<feature type="chain" id="PRO_0000326281" description="Matrix protein 1">
    <location>
        <begin position="1"/>
        <end position="252"/>
    </location>
</feature>
<feature type="region of interest" description="Membrane-binding" evidence="1">
    <location>
        <begin position="1"/>
        <end position="164"/>
    </location>
</feature>
<feature type="region of interest" description="RNP-binding" evidence="1">
    <location>
        <begin position="165"/>
        <end position="252"/>
    </location>
</feature>
<feature type="short sequence motif" description="Nuclear localization signal" evidence="1">
    <location>
        <begin position="101"/>
        <end position="105"/>
    </location>
</feature>
<feature type="sequence conflict" description="In Ref. 2; ABB20499." ref="2">
    <original>C</original>
    <variation>S</variation>
    <location>
        <position position="183"/>
    </location>
</feature>
<proteinExistence type="inferred from homology"/>
<accession>Q67171</accession>
<accession>Q20P41</accession>
<comment type="function">
    <text evidence="1">Plays critical roles in virus replication, from virus entry and uncoating to assembly and budding of the virus particle. M1 binding to ribonucleocapsids (RNPs) in nucleus seems to inhibit viral transcription. Interaction of viral NEP with M1-RNP is thought to promote nuclear export of the complex, which is targeted to the virion assembly site at the apical plasma membrane in polarized epithelial cells. Interactions with NA and HA may bring M1, a non-raft-associated protein, into lipid rafts. Forms a continuous shell on the inner side of the lipid bilayer in virion, where it binds the RNP. During virus entry into cell, the M2 ion channel acidifies the internal virion core, inducing M1 dissociation from the RNP. M1-free RNPs are transported to the nucleus, where viral transcription and replication can take place.</text>
</comment>
<comment type="function">
    <text evidence="1">Determines the virion's shape: spherical or filamentous. Clinical isolates of influenza are characterized by the presence of significant proportion of filamentous virions, whereas after multiple passage on eggs or cell culture, virions have only spherical morphology. Filamentous virions are thought to be important to infect neighboring cells, and spherical virions more suited to spread through aerosol between hosts organisms.</text>
</comment>
<comment type="subunit">
    <text evidence="1">Homodimer and homomultimer. Interacts with NEP. Binds ribonucleocapsid by both interacting with genomic RNA and NP protein. May interact with HA and NA. Cannot bind NP without genomic RNA.</text>
</comment>
<comment type="subcellular location">
    <subcellularLocation>
        <location evidence="1">Virion membrane</location>
        <topology evidence="1">Peripheral membrane protein</topology>
        <orientation evidence="1">Cytoplasmic side</orientation>
    </subcellularLocation>
    <subcellularLocation>
        <location evidence="1">Host nucleus</location>
    </subcellularLocation>
</comment>
<comment type="alternative products">
    <event type="alternative splicing"/>
    <isoform>
        <id>Q67171-1</id>
        <name>M1</name>
        <sequence type="displayed"/>
    </isoform>
    <isoform>
        <id>Q67170-1</id>
        <name>M2</name>
        <sequence type="external"/>
    </isoform>
    <text>Only the first 9 residues are shared by the 2 isoforms.</text>
</comment>
<comment type="miscellaneous">
    <text evidence="1">Most abundant protein in virion. When expressed alone can form virus-like particles in transfected cells.</text>
</comment>
<comment type="similarity">
    <text evidence="1">Belongs to the influenza viruses Matrix protein M1 family.</text>
</comment>
<sequence length="252" mass="27948">MSLLTEVETYVLSIIPSGPLKAEIAQRLENVFAGKNTDLEALMEWLKTRPILSPLTKGILGFVFTLTVPSERGLQRRRFVQNALNGNGDPNNMDKAIKLYKKLKRDVTFHGAKEVALGYSTGALASCMGLIYNRMGTVTTEVAFGLVCATCEQIADSQHRSYRQMATTTNPLIRHENRMVLACTTAKAMEQMAGSNEQAAEAMEIANQARQMVQAMRTVGTHPNSSTGLKDDLLENLQAYQKRMGVQMQRFK</sequence>
<reference key="1">
    <citation type="journal article" date="1991" name="J. Virol.">
        <title>Evolutionary analysis of the influenza A virus M gene with comparison of the M1 and M2 proteins.</title>
        <authorList>
            <person name="Ito T."/>
            <person name="Gorman O.T."/>
            <person name="Kawaoka Y."/>
            <person name="Bean W.J."/>
            <person name="Webster R.G."/>
        </authorList>
    </citation>
    <scope>NUCLEOTIDE SEQUENCE [GENOMIC RNA]</scope>
</reference>
<reference key="2">
    <citation type="journal article" date="2006" name="Science">
        <title>Large-scale sequence analysis of avian influenza isolates.</title>
        <authorList>
            <person name="Obenauer J.C."/>
            <person name="Denson J."/>
            <person name="Mehta P.K."/>
            <person name="Su X."/>
            <person name="Mukatira S."/>
            <person name="Finkelstein D.B."/>
            <person name="Xu X."/>
            <person name="Wang J."/>
            <person name="Ma J."/>
            <person name="Fan Y."/>
            <person name="Rakestraw K.M."/>
            <person name="Webster R.G."/>
            <person name="Hoffmann E."/>
            <person name="Krauss S."/>
            <person name="Zheng J."/>
            <person name="Zhang Z."/>
            <person name="Naeve C.W."/>
        </authorList>
    </citation>
    <scope>NUCLEOTIDE SEQUENCE [GENOMIC RNA]</scope>
</reference>
<evidence type="ECO:0000255" key="1">
    <source>
        <dbReference type="HAMAP-Rule" id="MF_04068"/>
    </source>
</evidence>
<organism>
    <name type="scientific">Influenza A virus (strain A/Equine/Prague/1/1956 H7N7)</name>
    <dbReference type="NCBI Taxonomy" id="380337"/>
    <lineage>
        <taxon>Viruses</taxon>
        <taxon>Riboviria</taxon>
        <taxon>Orthornavirae</taxon>
        <taxon>Negarnaviricota</taxon>
        <taxon>Polyploviricotina</taxon>
        <taxon>Insthoviricetes</taxon>
        <taxon>Articulavirales</taxon>
        <taxon>Orthomyxoviridae</taxon>
        <taxon>Alphainfluenzavirus</taxon>
        <taxon>Alphainfluenzavirus influenzae</taxon>
        <taxon>Influenza A virus</taxon>
    </lineage>
</organism>
<gene>
    <name evidence="1" type="primary">M</name>
</gene>
<protein>
    <recommendedName>
        <fullName evidence="1">Matrix protein 1</fullName>
        <shortName evidence="1">M1</shortName>
    </recommendedName>
</protein>
<keyword id="KW-0025">Alternative splicing</keyword>
<keyword id="KW-1048">Host nucleus</keyword>
<keyword id="KW-0472">Membrane</keyword>
<keyword id="KW-0694">RNA-binding</keyword>
<keyword id="KW-0468">Viral matrix protein</keyword>
<keyword id="KW-0946">Virion</keyword>
<organismHost>
    <name type="scientific">Aves</name>
    <dbReference type="NCBI Taxonomy" id="8782"/>
</organismHost>
<organismHost>
    <name type="scientific">Equus caballus</name>
    <name type="common">Horse</name>
    <dbReference type="NCBI Taxonomy" id="9796"/>
</organismHost>
<organismHost>
    <name type="scientific">Homo sapiens</name>
    <name type="common">Human</name>
    <dbReference type="NCBI Taxonomy" id="9606"/>
</organismHost>
<organismHost>
    <name type="scientific">Phocidae</name>
    <name type="common">true seals</name>
    <dbReference type="NCBI Taxonomy" id="9709"/>
</organismHost>
<name>M1_I56A3</name>